<feature type="chain" id="PRO_1000100343" description="CinA-like protein">
    <location>
        <begin position="1"/>
        <end position="408"/>
    </location>
</feature>
<reference key="1">
    <citation type="journal article" date="2011" name="J. Bacteriol.">
        <title>Genome sequence of Thermotoga sp. strain RQ2, a hyperthermophilic bacterium isolated from a geothermally heated region of the seafloor near Ribeira Quente, the Azores.</title>
        <authorList>
            <person name="Swithers K.S."/>
            <person name="DiPippo J.L."/>
            <person name="Bruce D.C."/>
            <person name="Detter C."/>
            <person name="Tapia R."/>
            <person name="Han S."/>
            <person name="Saunders E."/>
            <person name="Goodwin L.A."/>
            <person name="Han J."/>
            <person name="Woyke T."/>
            <person name="Pitluck S."/>
            <person name="Pennacchio L."/>
            <person name="Nolan M."/>
            <person name="Mikhailova N."/>
            <person name="Lykidis A."/>
            <person name="Land M.L."/>
            <person name="Brettin T."/>
            <person name="Stetter K.O."/>
            <person name="Nelson K.E."/>
            <person name="Gogarten J.P."/>
            <person name="Noll K.M."/>
        </authorList>
    </citation>
    <scope>NUCLEOTIDE SEQUENCE [LARGE SCALE GENOMIC DNA]</scope>
    <source>
        <strain>RQ2</strain>
    </source>
</reference>
<organism>
    <name type="scientific">Thermotoga sp. (strain RQ2)</name>
    <dbReference type="NCBI Taxonomy" id="126740"/>
    <lineage>
        <taxon>Bacteria</taxon>
        <taxon>Thermotogati</taxon>
        <taxon>Thermotogota</taxon>
        <taxon>Thermotogae</taxon>
        <taxon>Thermotogales</taxon>
        <taxon>Thermotogaceae</taxon>
        <taxon>Thermotoga</taxon>
    </lineage>
</organism>
<sequence>MKKAAIITIGSELLEGLILNKNAQFLCQELKNLGYIVVKVSTVGDDLISISEEVKTLLLKVDLLILTGGLGPTQDDLTRDAVAKVLNRSLKLNEELLSKIKEKIKKYHSEIPQNIERQALVIDGAEVLDNPVGSAPGQLLTVDGKIVILLPGPPRELIPMFNALKDRLRTPDALYQVVLKYYSIPEAVLEDLLKDILYSQNIVEVATMADHVEGVRLRLTTHMKNKEYLDEMVKKILDKTGEHLYGVNDEKMEEVVVRLLKDRKKTLAVAESCTGGMLSSLVVNVPGASEVFIGGVVAYSNDLKKHILGVREDTLKKHGAVSEECVQEMTEGLKKLTGADICVSISGIAGPSGGTPEKPVGTVFIDIFEHEHITMRYNFTGDRNMIRTRSAMMALENLRKYLKGRERV</sequence>
<comment type="similarity">
    <text evidence="1">Belongs to the CinA family.</text>
</comment>
<proteinExistence type="inferred from homology"/>
<evidence type="ECO:0000255" key="1">
    <source>
        <dbReference type="HAMAP-Rule" id="MF_00226"/>
    </source>
</evidence>
<accession>B1L804</accession>
<gene>
    <name type="ordered locus">TRQ2_0225</name>
</gene>
<dbReference type="EMBL" id="CP000969">
    <property type="protein sequence ID" value="ACB08585.1"/>
    <property type="molecule type" value="Genomic_DNA"/>
</dbReference>
<dbReference type="RefSeq" id="WP_012310402.1">
    <property type="nucleotide sequence ID" value="NC_010483.1"/>
</dbReference>
<dbReference type="SMR" id="B1L804"/>
<dbReference type="KEGG" id="trq:TRQ2_0225"/>
<dbReference type="HOGENOM" id="CLU_030805_9_3_0"/>
<dbReference type="Proteomes" id="UP000001687">
    <property type="component" value="Chromosome"/>
</dbReference>
<dbReference type="CDD" id="cd00885">
    <property type="entry name" value="cinA"/>
    <property type="match status" value="1"/>
</dbReference>
<dbReference type="Gene3D" id="3.30.70.2860">
    <property type="match status" value="1"/>
</dbReference>
<dbReference type="Gene3D" id="3.90.950.20">
    <property type="entry name" value="CinA-like"/>
    <property type="match status" value="1"/>
</dbReference>
<dbReference type="Gene3D" id="3.40.980.10">
    <property type="entry name" value="MoaB/Mog-like domain"/>
    <property type="match status" value="1"/>
</dbReference>
<dbReference type="HAMAP" id="MF_00226_B">
    <property type="entry name" value="CinA_B"/>
    <property type="match status" value="1"/>
</dbReference>
<dbReference type="InterPro" id="IPR050101">
    <property type="entry name" value="CinA"/>
</dbReference>
<dbReference type="InterPro" id="IPR036653">
    <property type="entry name" value="CinA-like_C"/>
</dbReference>
<dbReference type="InterPro" id="IPR008136">
    <property type="entry name" value="CinA_C"/>
</dbReference>
<dbReference type="InterPro" id="IPR041424">
    <property type="entry name" value="CinA_KH"/>
</dbReference>
<dbReference type="InterPro" id="IPR008135">
    <property type="entry name" value="Competence-induced_CinA"/>
</dbReference>
<dbReference type="InterPro" id="IPR036425">
    <property type="entry name" value="MoaB/Mog-like_dom_sf"/>
</dbReference>
<dbReference type="InterPro" id="IPR001453">
    <property type="entry name" value="MoaB/Mog_dom"/>
</dbReference>
<dbReference type="NCBIfam" id="TIGR00200">
    <property type="entry name" value="cinA_nterm"/>
    <property type="match status" value="1"/>
</dbReference>
<dbReference type="NCBIfam" id="TIGR00177">
    <property type="entry name" value="molyb_syn"/>
    <property type="match status" value="1"/>
</dbReference>
<dbReference type="NCBIfam" id="TIGR00199">
    <property type="entry name" value="PncC_domain"/>
    <property type="match status" value="1"/>
</dbReference>
<dbReference type="NCBIfam" id="NF001813">
    <property type="entry name" value="PRK00549.1"/>
    <property type="match status" value="1"/>
</dbReference>
<dbReference type="PANTHER" id="PTHR13939">
    <property type="entry name" value="NICOTINAMIDE-NUCLEOTIDE AMIDOHYDROLASE PNCC"/>
    <property type="match status" value="1"/>
</dbReference>
<dbReference type="PANTHER" id="PTHR13939:SF0">
    <property type="entry name" value="NMN AMIDOHYDROLASE-LIKE PROTEIN YFAY"/>
    <property type="match status" value="1"/>
</dbReference>
<dbReference type="Pfam" id="PF02464">
    <property type="entry name" value="CinA"/>
    <property type="match status" value="1"/>
</dbReference>
<dbReference type="Pfam" id="PF18146">
    <property type="entry name" value="CinA_KH"/>
    <property type="match status" value="1"/>
</dbReference>
<dbReference type="Pfam" id="PF00994">
    <property type="entry name" value="MoCF_biosynth"/>
    <property type="match status" value="1"/>
</dbReference>
<dbReference type="PIRSF" id="PIRSF006728">
    <property type="entry name" value="CinA"/>
    <property type="match status" value="1"/>
</dbReference>
<dbReference type="SMART" id="SM00852">
    <property type="entry name" value="MoCF_biosynth"/>
    <property type="match status" value="1"/>
</dbReference>
<dbReference type="SUPFAM" id="SSF142433">
    <property type="entry name" value="CinA-like"/>
    <property type="match status" value="1"/>
</dbReference>
<dbReference type="SUPFAM" id="SSF53218">
    <property type="entry name" value="Molybdenum cofactor biosynthesis proteins"/>
    <property type="match status" value="1"/>
</dbReference>
<name>CINAL_THESQ</name>
<protein>
    <recommendedName>
        <fullName evidence="1">CinA-like protein</fullName>
    </recommendedName>
</protein>